<feature type="chain" id="PRO_0000231259" description="UDP-N-acetylglucosamine 1-carboxyvinyltransferase">
    <location>
        <begin position="1"/>
        <end position="419"/>
    </location>
</feature>
<feature type="active site" description="Proton donor" evidence="1">
    <location>
        <position position="115"/>
    </location>
</feature>
<feature type="binding site" evidence="1">
    <location>
        <begin position="22"/>
        <end position="23"/>
    </location>
    <ligand>
        <name>phosphoenolpyruvate</name>
        <dbReference type="ChEBI" id="CHEBI:58702"/>
    </ligand>
</feature>
<feature type="binding site" evidence="1">
    <location>
        <position position="91"/>
    </location>
    <ligand>
        <name>UDP-N-acetyl-alpha-D-glucosamine</name>
        <dbReference type="ChEBI" id="CHEBI:57705"/>
    </ligand>
</feature>
<feature type="binding site" evidence="1">
    <location>
        <begin position="120"/>
        <end position="124"/>
    </location>
    <ligand>
        <name>UDP-N-acetyl-alpha-D-glucosamine</name>
        <dbReference type="ChEBI" id="CHEBI:57705"/>
    </ligand>
</feature>
<feature type="binding site" evidence="1">
    <location>
        <begin position="160"/>
        <end position="163"/>
    </location>
    <ligand>
        <name>UDP-N-acetyl-alpha-D-glucosamine</name>
        <dbReference type="ChEBI" id="CHEBI:57705"/>
    </ligand>
</feature>
<feature type="binding site" evidence="1">
    <location>
        <position position="305"/>
    </location>
    <ligand>
        <name>UDP-N-acetyl-alpha-D-glucosamine</name>
        <dbReference type="ChEBI" id="CHEBI:57705"/>
    </ligand>
</feature>
<feature type="binding site" evidence="1">
    <location>
        <position position="327"/>
    </location>
    <ligand>
        <name>UDP-N-acetyl-alpha-D-glucosamine</name>
        <dbReference type="ChEBI" id="CHEBI:57705"/>
    </ligand>
</feature>
<feature type="modified residue" description="2-(S-cysteinyl)pyruvic acid O-phosphothioketal" evidence="1">
    <location>
        <position position="115"/>
    </location>
</feature>
<evidence type="ECO:0000255" key="1">
    <source>
        <dbReference type="HAMAP-Rule" id="MF_00111"/>
    </source>
</evidence>
<reference key="1">
    <citation type="journal article" date="2004" name="Nat. Genet.">
        <title>Comparison of genome degradation in Paratyphi A and Typhi, human-restricted serovars of Salmonella enterica that cause typhoid.</title>
        <authorList>
            <person name="McClelland M."/>
            <person name="Sanderson K.E."/>
            <person name="Clifton S.W."/>
            <person name="Latreille P."/>
            <person name="Porwollik S."/>
            <person name="Sabo A."/>
            <person name="Meyer R."/>
            <person name="Bieri T."/>
            <person name="Ozersky P."/>
            <person name="McLellan M."/>
            <person name="Harkins C.R."/>
            <person name="Wang C."/>
            <person name="Nguyen C."/>
            <person name="Berghoff A."/>
            <person name="Elliott G."/>
            <person name="Kohlberg S."/>
            <person name="Strong C."/>
            <person name="Du F."/>
            <person name="Carter J."/>
            <person name="Kremizki C."/>
            <person name="Layman D."/>
            <person name="Leonard S."/>
            <person name="Sun H."/>
            <person name="Fulton L."/>
            <person name="Nash W."/>
            <person name="Miner T."/>
            <person name="Minx P."/>
            <person name="Delehaunty K."/>
            <person name="Fronick C."/>
            <person name="Magrini V."/>
            <person name="Nhan M."/>
            <person name="Warren W."/>
            <person name="Florea L."/>
            <person name="Spieth J."/>
            <person name="Wilson R.K."/>
        </authorList>
    </citation>
    <scope>NUCLEOTIDE SEQUENCE [LARGE SCALE GENOMIC DNA]</scope>
    <source>
        <strain>ATCC 9150 / SARB42</strain>
    </source>
</reference>
<protein>
    <recommendedName>
        <fullName evidence="1">UDP-N-acetylglucosamine 1-carboxyvinyltransferase</fullName>
        <ecNumber evidence="1">2.5.1.7</ecNumber>
    </recommendedName>
    <alternativeName>
        <fullName evidence="1">Enoylpyruvate transferase</fullName>
    </alternativeName>
    <alternativeName>
        <fullName evidence="1">UDP-N-acetylglucosamine enolpyruvyl transferase</fullName>
        <shortName evidence="1">EPT</shortName>
    </alternativeName>
</protein>
<organism>
    <name type="scientific">Salmonella paratyphi A (strain ATCC 9150 / SARB42)</name>
    <dbReference type="NCBI Taxonomy" id="295319"/>
    <lineage>
        <taxon>Bacteria</taxon>
        <taxon>Pseudomonadati</taxon>
        <taxon>Pseudomonadota</taxon>
        <taxon>Gammaproteobacteria</taxon>
        <taxon>Enterobacterales</taxon>
        <taxon>Enterobacteriaceae</taxon>
        <taxon>Salmonella</taxon>
    </lineage>
</organism>
<accession>Q5PLD1</accession>
<dbReference type="EC" id="2.5.1.7" evidence="1"/>
<dbReference type="EMBL" id="CP000026">
    <property type="protein sequence ID" value="AAV78999.1"/>
    <property type="molecule type" value="Genomic_DNA"/>
</dbReference>
<dbReference type="RefSeq" id="WP_000357288.1">
    <property type="nucleotide sequence ID" value="NC_006511.1"/>
</dbReference>
<dbReference type="SMR" id="Q5PLD1"/>
<dbReference type="KEGG" id="spt:SPA3174"/>
<dbReference type="HOGENOM" id="CLU_027387_0_0_6"/>
<dbReference type="UniPathway" id="UPA00219"/>
<dbReference type="Proteomes" id="UP000008185">
    <property type="component" value="Chromosome"/>
</dbReference>
<dbReference type="GO" id="GO:0005737">
    <property type="term" value="C:cytoplasm"/>
    <property type="evidence" value="ECO:0007669"/>
    <property type="project" value="UniProtKB-SubCell"/>
</dbReference>
<dbReference type="GO" id="GO:0008760">
    <property type="term" value="F:UDP-N-acetylglucosamine 1-carboxyvinyltransferase activity"/>
    <property type="evidence" value="ECO:0007669"/>
    <property type="project" value="UniProtKB-UniRule"/>
</dbReference>
<dbReference type="GO" id="GO:0051301">
    <property type="term" value="P:cell division"/>
    <property type="evidence" value="ECO:0007669"/>
    <property type="project" value="UniProtKB-KW"/>
</dbReference>
<dbReference type="GO" id="GO:0071555">
    <property type="term" value="P:cell wall organization"/>
    <property type="evidence" value="ECO:0007669"/>
    <property type="project" value="UniProtKB-KW"/>
</dbReference>
<dbReference type="GO" id="GO:0009252">
    <property type="term" value="P:peptidoglycan biosynthetic process"/>
    <property type="evidence" value="ECO:0007669"/>
    <property type="project" value="UniProtKB-UniRule"/>
</dbReference>
<dbReference type="GO" id="GO:0008360">
    <property type="term" value="P:regulation of cell shape"/>
    <property type="evidence" value="ECO:0007669"/>
    <property type="project" value="UniProtKB-KW"/>
</dbReference>
<dbReference type="GO" id="GO:0019277">
    <property type="term" value="P:UDP-N-acetylgalactosamine biosynthetic process"/>
    <property type="evidence" value="ECO:0007669"/>
    <property type="project" value="InterPro"/>
</dbReference>
<dbReference type="CDD" id="cd01555">
    <property type="entry name" value="UdpNAET"/>
    <property type="match status" value="1"/>
</dbReference>
<dbReference type="FunFam" id="3.65.10.10:FF:000002">
    <property type="entry name" value="UDP-N-acetylglucosamine 1-carboxyvinyltransferase"/>
    <property type="match status" value="1"/>
</dbReference>
<dbReference type="Gene3D" id="3.65.10.10">
    <property type="entry name" value="Enolpyruvate transferase domain"/>
    <property type="match status" value="2"/>
</dbReference>
<dbReference type="HAMAP" id="MF_00111">
    <property type="entry name" value="MurA"/>
    <property type="match status" value="1"/>
</dbReference>
<dbReference type="InterPro" id="IPR001986">
    <property type="entry name" value="Enolpyruvate_Tfrase_dom"/>
</dbReference>
<dbReference type="InterPro" id="IPR036968">
    <property type="entry name" value="Enolpyruvate_Tfrase_sf"/>
</dbReference>
<dbReference type="InterPro" id="IPR050068">
    <property type="entry name" value="MurA_subfamily"/>
</dbReference>
<dbReference type="InterPro" id="IPR013792">
    <property type="entry name" value="RNA3'P_cycl/enolpyr_Trfase_a/b"/>
</dbReference>
<dbReference type="InterPro" id="IPR005750">
    <property type="entry name" value="UDP_GlcNAc_COvinyl_MurA"/>
</dbReference>
<dbReference type="NCBIfam" id="TIGR01072">
    <property type="entry name" value="murA"/>
    <property type="match status" value="1"/>
</dbReference>
<dbReference type="NCBIfam" id="NF006873">
    <property type="entry name" value="PRK09369.1"/>
    <property type="match status" value="1"/>
</dbReference>
<dbReference type="PANTHER" id="PTHR43783">
    <property type="entry name" value="UDP-N-ACETYLGLUCOSAMINE 1-CARBOXYVINYLTRANSFERASE"/>
    <property type="match status" value="1"/>
</dbReference>
<dbReference type="PANTHER" id="PTHR43783:SF1">
    <property type="entry name" value="UDP-N-ACETYLGLUCOSAMINE 1-CARBOXYVINYLTRANSFERASE"/>
    <property type="match status" value="1"/>
</dbReference>
<dbReference type="Pfam" id="PF00275">
    <property type="entry name" value="EPSP_synthase"/>
    <property type="match status" value="1"/>
</dbReference>
<dbReference type="SUPFAM" id="SSF55205">
    <property type="entry name" value="EPT/RTPC-like"/>
    <property type="match status" value="1"/>
</dbReference>
<comment type="function">
    <text evidence="1">Cell wall formation. Adds enolpyruvyl to UDP-N-acetylglucosamine.</text>
</comment>
<comment type="catalytic activity">
    <reaction evidence="1">
        <text>phosphoenolpyruvate + UDP-N-acetyl-alpha-D-glucosamine = UDP-N-acetyl-3-O-(1-carboxyvinyl)-alpha-D-glucosamine + phosphate</text>
        <dbReference type="Rhea" id="RHEA:18681"/>
        <dbReference type="ChEBI" id="CHEBI:43474"/>
        <dbReference type="ChEBI" id="CHEBI:57705"/>
        <dbReference type="ChEBI" id="CHEBI:58702"/>
        <dbReference type="ChEBI" id="CHEBI:68483"/>
        <dbReference type="EC" id="2.5.1.7"/>
    </reaction>
</comment>
<comment type="pathway">
    <text evidence="1">Cell wall biogenesis; peptidoglycan biosynthesis.</text>
</comment>
<comment type="subcellular location">
    <subcellularLocation>
        <location evidence="1">Cytoplasm</location>
    </subcellularLocation>
</comment>
<comment type="similarity">
    <text evidence="1">Belongs to the EPSP synthase family. MurA subfamily.</text>
</comment>
<gene>
    <name evidence="1" type="primary">murA</name>
    <name type="ordered locus">SPA3174</name>
</gene>
<name>MURA_SALPA</name>
<sequence length="419" mass="44741">MDKFRVQGPTTLQGEVTISGAKNAALPILFAALLAEEPVEIQNVPKLKDVDTSMKLLSQLGAKVERNGSVHIDASQVNVFCAPYDLVKTMRASIWALGPLVARFGQGQVSLPGGCTIGARPVDLHITGLEQLGATIKLEEGYVKASVEGRLKGAHIVMDKVSVGATVTIMCAATLAEGTTIIENAAREPEIVDTANFLVTLGAKIAGQGTDRITIEGVERLGGGVYRVLPDRIETGTFLVAAAISRGKILCRNAQPDTLDAVLAKLRDAGADIEVGEDWISLDMHGKRPKAVNVRTAPHPAFPTDMQAQFTLLNLVAEGTGFITETVFENRFMHVPELSRMGARAEIESNTVICHGVETLSGAQVMATDLRASASLVLAGCIAEGTTIVDRIYHIDRGYERIEDKLRALGANIERVKGE</sequence>
<proteinExistence type="inferred from homology"/>
<keyword id="KW-0131">Cell cycle</keyword>
<keyword id="KW-0132">Cell division</keyword>
<keyword id="KW-0133">Cell shape</keyword>
<keyword id="KW-0961">Cell wall biogenesis/degradation</keyword>
<keyword id="KW-0963">Cytoplasm</keyword>
<keyword id="KW-0573">Peptidoglycan synthesis</keyword>
<keyword id="KW-0670">Pyruvate</keyword>
<keyword id="KW-0808">Transferase</keyword>